<comment type="function">
    <text>Capsid protein self-assembles to form rod-shaped virions about 18 nm in diameter with a central canal enclosing the viral genomic RNA.</text>
</comment>
<comment type="subcellular location">
    <subcellularLocation>
        <location evidence="2">Virion</location>
    </subcellularLocation>
</comment>
<comment type="similarity">
    <text evidence="2">Belongs to the virgaviridae capsid protein family.</text>
</comment>
<gene>
    <name type="primary">CP</name>
</gene>
<feature type="initiator methionine" description="Removed; by host" evidence="1">
    <location>
        <position position="1"/>
    </location>
</feature>
<feature type="chain" id="PRO_0000144935" description="Capsid protein">
    <location>
        <begin position="2"/>
        <end position="157"/>
    </location>
</feature>
<feature type="modified residue" description="N-acetylalanine; by host" evidence="1">
    <location>
        <position position="2"/>
    </location>
</feature>
<proteinExistence type="inferred from homology"/>
<reference key="1">
    <citation type="journal article" date="1993" name="Arch. Virol.">
        <title>The nucleotide sequence of the coat protein genes and 3' non-coding regions of two resistance-breaking tobamoviruses in pepper shows that they are different viruses.</title>
        <authorList>
            <person name="Garcia-Luque I."/>
            <person name="Ferrero M.L."/>
            <person name="Rodriquez J.M."/>
            <person name="Alonso E."/>
            <person name="de la Cruz A."/>
            <person name="Sanz A.I."/>
            <person name="Vaquero C."/>
            <person name="Serra M.T."/>
            <person name="Diaz-Ruiz J.R."/>
        </authorList>
    </citation>
    <scope>NUCLEOTIDE SEQUENCE [GENOMIC RNA]</scope>
</reference>
<dbReference type="EMBL" id="X72587">
    <property type="protein sequence ID" value="CAA51184.1"/>
    <property type="molecule type" value="Genomic_RNA"/>
</dbReference>
<dbReference type="SMR" id="Q84843"/>
<dbReference type="GO" id="GO:0019029">
    <property type="term" value="C:helical viral capsid"/>
    <property type="evidence" value="ECO:0007669"/>
    <property type="project" value="UniProtKB-KW"/>
</dbReference>
<dbReference type="GO" id="GO:0005198">
    <property type="term" value="F:structural molecule activity"/>
    <property type="evidence" value="ECO:0007669"/>
    <property type="project" value="InterPro"/>
</dbReference>
<dbReference type="Gene3D" id="1.20.120.70">
    <property type="entry name" value="Tobacco mosaic virus-like, coat protein"/>
    <property type="match status" value="1"/>
</dbReference>
<dbReference type="InterPro" id="IPR001337">
    <property type="entry name" value="TMV-like_coat"/>
</dbReference>
<dbReference type="InterPro" id="IPR036417">
    <property type="entry name" value="TMV-like_coat_sf"/>
</dbReference>
<dbReference type="Pfam" id="PF00721">
    <property type="entry name" value="TMV_coat"/>
    <property type="match status" value="1"/>
</dbReference>
<dbReference type="SUPFAM" id="SSF47195">
    <property type="entry name" value="TMV-like viral coat proteins"/>
    <property type="match status" value="1"/>
</dbReference>
<organismHost>
    <name type="scientific">Capsicum</name>
    <name type="common">peppers</name>
    <dbReference type="NCBI Taxonomy" id="4071"/>
</organismHost>
<protein>
    <recommendedName>
        <fullName>Capsid protein</fullName>
    </recommendedName>
    <alternativeName>
        <fullName>Coat protein</fullName>
    </alternativeName>
</protein>
<name>CAPSD_PMMVI</name>
<keyword id="KW-0007">Acetylation</keyword>
<keyword id="KW-0167">Capsid protein</keyword>
<keyword id="KW-1139">Helical capsid protein</keyword>
<keyword id="KW-0946">Virion</keyword>
<sequence>MAYTVTSANQLVYLGSVWADPLELQNLCTSALGNQFQTQQARTTVQQQFSDVWKTIPTATVRFPATGFKVFRYNAVLDSLVSALLGAFDTRNRIIEVENPQNPTTAETLDATRRVDDATVAIRASISNLMNELVRGTGNYNQALFESVSGLTWATTP</sequence>
<organism>
    <name type="scientific">Pepper mild mottle virus (strain Italian)</name>
    <name type="common">PMMV-I</name>
    <dbReference type="NCBI Taxonomy" id="138306"/>
    <lineage>
        <taxon>Viruses</taxon>
        <taxon>Riboviria</taxon>
        <taxon>Orthornavirae</taxon>
        <taxon>Kitrinoviricota</taxon>
        <taxon>Alsuviricetes</taxon>
        <taxon>Martellivirales</taxon>
        <taxon>Virgaviridae</taxon>
        <taxon>Tobamovirus</taxon>
        <taxon>Pepper mild mottle virus</taxon>
    </lineage>
</organism>
<evidence type="ECO:0000250" key="1"/>
<evidence type="ECO:0000305" key="2"/>
<accession>Q84843</accession>